<proteinExistence type="predicted"/>
<dbReference type="EMBL" id="AL391143">
    <property type="protein sequence ID" value="CAC01761.1"/>
    <property type="status" value="ALT_TERM"/>
    <property type="molecule type" value="Genomic_DNA"/>
</dbReference>
<dbReference type="EMBL" id="CP002688">
    <property type="protein sequence ID" value="AED92185.1"/>
    <property type="molecule type" value="Genomic_DNA"/>
</dbReference>
<dbReference type="PIR" id="T51540">
    <property type="entry name" value="T51540"/>
</dbReference>
<dbReference type="RefSeq" id="NP_197066.1">
    <property type="nucleotide sequence ID" value="NM_121566.2"/>
</dbReference>
<dbReference type="BioGRID" id="16692">
    <property type="interactions" value="4"/>
</dbReference>
<dbReference type="FunCoup" id="Q9LF20">
    <property type="interactions" value="8"/>
</dbReference>
<dbReference type="PaxDb" id="3702-AT5G15620.1"/>
<dbReference type="EnsemblPlants" id="AT5G15620.1">
    <property type="protein sequence ID" value="AT5G15620.1"/>
    <property type="gene ID" value="AT5G15620"/>
</dbReference>
<dbReference type="GeneID" id="831416"/>
<dbReference type="Gramene" id="AT5G15620.1">
    <property type="protein sequence ID" value="AT5G15620.1"/>
    <property type="gene ID" value="AT5G15620"/>
</dbReference>
<dbReference type="KEGG" id="ath:AT5G15620"/>
<dbReference type="Araport" id="AT5G15620"/>
<dbReference type="TAIR" id="AT5G15620"/>
<dbReference type="HOGENOM" id="CLU_010721_7_4_1"/>
<dbReference type="InParanoid" id="Q9LF20"/>
<dbReference type="OMA" id="KEWEPEP"/>
<dbReference type="PhylomeDB" id="Q9LF20"/>
<dbReference type="PRO" id="PR:Q9LF20"/>
<dbReference type="Proteomes" id="UP000006548">
    <property type="component" value="Chromosome 5"/>
</dbReference>
<dbReference type="ExpressionAtlas" id="Q9LF20">
    <property type="expression patterns" value="baseline"/>
</dbReference>
<dbReference type="Gene3D" id="1.20.1280.50">
    <property type="match status" value="1"/>
</dbReference>
<dbReference type="Gene3D" id="3.80.10.10">
    <property type="entry name" value="Ribonuclease Inhibitor"/>
    <property type="match status" value="1"/>
</dbReference>
<dbReference type="InterPro" id="IPR036047">
    <property type="entry name" value="F-box-like_dom_sf"/>
</dbReference>
<dbReference type="InterPro" id="IPR001810">
    <property type="entry name" value="F-box_dom"/>
</dbReference>
<dbReference type="InterPro" id="IPR006566">
    <property type="entry name" value="FBD"/>
</dbReference>
<dbReference type="InterPro" id="IPR055294">
    <property type="entry name" value="FBL60-like"/>
</dbReference>
<dbReference type="InterPro" id="IPR032675">
    <property type="entry name" value="LRR_dom_sf"/>
</dbReference>
<dbReference type="InterPro" id="IPR055411">
    <property type="entry name" value="LRR_FXL15/At3g58940/PEG3-like"/>
</dbReference>
<dbReference type="PANTHER" id="PTHR31293">
    <property type="entry name" value="RNI-LIKE SUPERFAMILY PROTEIN"/>
    <property type="match status" value="1"/>
</dbReference>
<dbReference type="PANTHER" id="PTHR31293:SF12">
    <property type="entry name" value="RNI-LIKE SUPERFAMILY PROTEIN"/>
    <property type="match status" value="1"/>
</dbReference>
<dbReference type="Pfam" id="PF00646">
    <property type="entry name" value="F-box"/>
    <property type="match status" value="1"/>
</dbReference>
<dbReference type="Pfam" id="PF24758">
    <property type="entry name" value="LRR_At5g56370"/>
    <property type="match status" value="1"/>
</dbReference>
<dbReference type="SMART" id="SM00579">
    <property type="entry name" value="FBD"/>
    <property type="match status" value="1"/>
</dbReference>
<dbReference type="SMART" id="SM00256">
    <property type="entry name" value="FBOX"/>
    <property type="match status" value="1"/>
</dbReference>
<dbReference type="SUPFAM" id="SSF81383">
    <property type="entry name" value="F-box domain"/>
    <property type="match status" value="1"/>
</dbReference>
<dbReference type="SUPFAM" id="SSF52047">
    <property type="entry name" value="RNI-like"/>
    <property type="match status" value="1"/>
</dbReference>
<dbReference type="PROSITE" id="PS50181">
    <property type="entry name" value="FBOX"/>
    <property type="match status" value="1"/>
</dbReference>
<evidence type="ECO:0000255" key="1">
    <source>
        <dbReference type="PROSITE-ProRule" id="PRU00080"/>
    </source>
</evidence>
<name>FBL81_ARATH</name>
<organism>
    <name type="scientific">Arabidopsis thaliana</name>
    <name type="common">Mouse-ear cress</name>
    <dbReference type="NCBI Taxonomy" id="3702"/>
    <lineage>
        <taxon>Eukaryota</taxon>
        <taxon>Viridiplantae</taxon>
        <taxon>Streptophyta</taxon>
        <taxon>Embryophyta</taxon>
        <taxon>Tracheophyta</taxon>
        <taxon>Spermatophyta</taxon>
        <taxon>Magnoliopsida</taxon>
        <taxon>eudicotyledons</taxon>
        <taxon>Gunneridae</taxon>
        <taxon>Pentapetalae</taxon>
        <taxon>rosids</taxon>
        <taxon>malvids</taxon>
        <taxon>Brassicales</taxon>
        <taxon>Brassicaceae</taxon>
        <taxon>Camelineae</taxon>
        <taxon>Arabidopsis</taxon>
    </lineage>
</organism>
<keyword id="KW-0433">Leucine-rich repeat</keyword>
<keyword id="KW-1185">Reference proteome</keyword>
<keyword id="KW-0677">Repeat</keyword>
<feature type="chain" id="PRO_0000281978" description="Putative F-box/LRR-repeat protein At5g15620">
    <location>
        <begin position="1"/>
        <end position="440"/>
    </location>
</feature>
<feature type="domain" description="F-box" evidence="1">
    <location>
        <begin position="1"/>
        <end position="52"/>
    </location>
</feature>
<feature type="repeat" description="LRR 1">
    <location>
        <begin position="4"/>
        <end position="31"/>
    </location>
</feature>
<feature type="repeat" description="LRR 2">
    <location>
        <begin position="126"/>
        <end position="153"/>
    </location>
</feature>
<feature type="repeat" description="LRR 3">
    <location>
        <begin position="156"/>
        <end position="181"/>
    </location>
</feature>
<feature type="repeat" description="LRR 4">
    <location>
        <begin position="194"/>
        <end position="205"/>
    </location>
</feature>
<feature type="repeat" description="LRR 5">
    <location>
        <begin position="210"/>
        <end position="235"/>
    </location>
</feature>
<feature type="repeat" description="LRR 6">
    <location>
        <begin position="264"/>
        <end position="289"/>
    </location>
</feature>
<feature type="repeat" description="LRR 7">
    <location>
        <begin position="318"/>
        <end position="343"/>
    </location>
</feature>
<gene>
    <name type="ordered locus">At5g15620</name>
    <name type="ORF">T20K14.230</name>
</gene>
<protein>
    <recommendedName>
        <fullName>Putative F-box/LRR-repeat protein At5g15620</fullName>
    </recommendedName>
</protein>
<sequence>MDRFSNLPDDVIYHIVSFLSAKEATCLKFVSKNFQNLVTIKRNVVFHHWESFKNFVDGLLAEPASYRIKRFSLKLVSMDFAQYNIVNDCLCNVLKRGVLDLELDINVKEDYILPSDVFTCKTVVRLKLGCGFVIDILPKNALLPALKTLILDSVRFYASDGCAFTRLLSASPVLEELVIDRLNWEHWKGSRFVSSPTLKRLTLRRKEWEPEPETWTDFESVSFDTPSLAYLKYKDVIPYGYPIVNLNSIVEARLTLPREVEYDYWLNRSADPSNLIRGLKNVEILSIKVLHTMDLLFYNFKEAVPVFENLIHLSVTSEADFCWDPLQILLEKSPNLKTLTIEGPLHYNFYEKLDLEAVCECLLGYSFLLSCPIKVLKITEFVGDIGEIVQMKHVLGKLPCLELLEVHVQARRDDKKLQIMADLLMLPRTSSKCKVKVHFS</sequence>
<reference key="1">
    <citation type="journal article" date="2000" name="Nature">
        <title>Sequence and analysis of chromosome 5 of the plant Arabidopsis thaliana.</title>
        <authorList>
            <person name="Tabata S."/>
            <person name="Kaneko T."/>
            <person name="Nakamura Y."/>
            <person name="Kotani H."/>
            <person name="Kato T."/>
            <person name="Asamizu E."/>
            <person name="Miyajima N."/>
            <person name="Sasamoto S."/>
            <person name="Kimura T."/>
            <person name="Hosouchi T."/>
            <person name="Kawashima K."/>
            <person name="Kohara M."/>
            <person name="Matsumoto M."/>
            <person name="Matsuno A."/>
            <person name="Muraki A."/>
            <person name="Nakayama S."/>
            <person name="Nakazaki N."/>
            <person name="Naruo K."/>
            <person name="Okumura S."/>
            <person name="Shinpo S."/>
            <person name="Takeuchi C."/>
            <person name="Wada T."/>
            <person name="Watanabe A."/>
            <person name="Yamada M."/>
            <person name="Yasuda M."/>
            <person name="Sato S."/>
            <person name="de la Bastide M."/>
            <person name="Huang E."/>
            <person name="Spiegel L."/>
            <person name="Gnoj L."/>
            <person name="O'Shaughnessy A."/>
            <person name="Preston R."/>
            <person name="Habermann K."/>
            <person name="Murray J."/>
            <person name="Johnson D."/>
            <person name="Rohlfing T."/>
            <person name="Nelson J."/>
            <person name="Stoneking T."/>
            <person name="Pepin K."/>
            <person name="Spieth J."/>
            <person name="Sekhon M."/>
            <person name="Armstrong J."/>
            <person name="Becker M."/>
            <person name="Belter E."/>
            <person name="Cordum H."/>
            <person name="Cordes M."/>
            <person name="Courtney L."/>
            <person name="Courtney W."/>
            <person name="Dante M."/>
            <person name="Du H."/>
            <person name="Edwards J."/>
            <person name="Fryman J."/>
            <person name="Haakensen B."/>
            <person name="Lamar E."/>
            <person name="Latreille P."/>
            <person name="Leonard S."/>
            <person name="Meyer R."/>
            <person name="Mulvaney E."/>
            <person name="Ozersky P."/>
            <person name="Riley A."/>
            <person name="Strowmatt C."/>
            <person name="Wagner-McPherson C."/>
            <person name="Wollam A."/>
            <person name="Yoakum M."/>
            <person name="Bell M."/>
            <person name="Dedhia N."/>
            <person name="Parnell L."/>
            <person name="Shah R."/>
            <person name="Rodriguez M."/>
            <person name="Hoon See L."/>
            <person name="Vil D."/>
            <person name="Baker J."/>
            <person name="Kirchoff K."/>
            <person name="Toth K."/>
            <person name="King L."/>
            <person name="Bahret A."/>
            <person name="Miller B."/>
            <person name="Marra M.A."/>
            <person name="Martienssen R."/>
            <person name="McCombie W.R."/>
            <person name="Wilson R.K."/>
            <person name="Murphy G."/>
            <person name="Bancroft I."/>
            <person name="Volckaert G."/>
            <person name="Wambutt R."/>
            <person name="Duesterhoeft A."/>
            <person name="Stiekema W."/>
            <person name="Pohl T."/>
            <person name="Entian K.-D."/>
            <person name="Terryn N."/>
            <person name="Hartley N."/>
            <person name="Bent E."/>
            <person name="Johnson S."/>
            <person name="Langham S.-A."/>
            <person name="McCullagh B."/>
            <person name="Robben J."/>
            <person name="Grymonprez B."/>
            <person name="Zimmermann W."/>
            <person name="Ramsperger U."/>
            <person name="Wedler H."/>
            <person name="Balke K."/>
            <person name="Wedler E."/>
            <person name="Peters S."/>
            <person name="van Staveren M."/>
            <person name="Dirkse W."/>
            <person name="Mooijman P."/>
            <person name="Klein Lankhorst R."/>
            <person name="Weitzenegger T."/>
            <person name="Bothe G."/>
            <person name="Rose M."/>
            <person name="Hauf J."/>
            <person name="Berneiser S."/>
            <person name="Hempel S."/>
            <person name="Feldpausch M."/>
            <person name="Lamberth S."/>
            <person name="Villarroel R."/>
            <person name="Gielen J."/>
            <person name="Ardiles W."/>
            <person name="Bents O."/>
            <person name="Lemcke K."/>
            <person name="Kolesov G."/>
            <person name="Mayer K.F.X."/>
            <person name="Rudd S."/>
            <person name="Schoof H."/>
            <person name="Schueller C."/>
            <person name="Zaccaria P."/>
            <person name="Mewes H.-W."/>
            <person name="Bevan M."/>
            <person name="Fransz P.F."/>
        </authorList>
    </citation>
    <scope>NUCLEOTIDE SEQUENCE [LARGE SCALE GENOMIC DNA]</scope>
    <source>
        <strain>cv. Columbia</strain>
    </source>
</reference>
<reference key="2">
    <citation type="journal article" date="2017" name="Plant J.">
        <title>Araport11: a complete reannotation of the Arabidopsis thaliana reference genome.</title>
        <authorList>
            <person name="Cheng C.Y."/>
            <person name="Krishnakumar V."/>
            <person name="Chan A.P."/>
            <person name="Thibaud-Nissen F."/>
            <person name="Schobel S."/>
            <person name="Town C.D."/>
        </authorList>
    </citation>
    <scope>GENOME REANNOTATION</scope>
    <source>
        <strain>cv. Columbia</strain>
    </source>
</reference>
<accession>Q9LF20</accession>